<proteinExistence type="inferred from homology"/>
<evidence type="ECO:0000255" key="1">
    <source>
        <dbReference type="HAMAP-Rule" id="MF_01716"/>
    </source>
</evidence>
<organism>
    <name type="scientific">Agrobacterium fabrum (strain C58 / ATCC 33970)</name>
    <name type="common">Agrobacterium tumefaciens (strain C58)</name>
    <dbReference type="NCBI Taxonomy" id="176299"/>
    <lineage>
        <taxon>Bacteria</taxon>
        <taxon>Pseudomonadati</taxon>
        <taxon>Pseudomonadota</taxon>
        <taxon>Alphaproteobacteria</taxon>
        <taxon>Hyphomicrobiales</taxon>
        <taxon>Rhizobiaceae</taxon>
        <taxon>Rhizobium/Agrobacterium group</taxon>
        <taxon>Agrobacterium</taxon>
        <taxon>Agrobacterium tumefaciens complex</taxon>
    </lineage>
</organism>
<dbReference type="EC" id="7.5.2.7" evidence="1"/>
<dbReference type="EMBL" id="AE007870">
    <property type="protein sequence ID" value="AAK89539.1"/>
    <property type="molecule type" value="Genomic_DNA"/>
</dbReference>
<dbReference type="PIR" id="A99252">
    <property type="entry name" value="A99252"/>
</dbReference>
<dbReference type="PIR" id="AC3034">
    <property type="entry name" value="AC3034"/>
</dbReference>
<dbReference type="RefSeq" id="NP_356754.1">
    <property type="nucleotide sequence ID" value="NC_003063.2"/>
</dbReference>
<dbReference type="RefSeq" id="WP_010973400.1">
    <property type="nucleotide sequence ID" value="NC_003063.2"/>
</dbReference>
<dbReference type="SMR" id="Q8U949"/>
<dbReference type="STRING" id="176299.Atu3880"/>
<dbReference type="EnsemblBacteria" id="AAK89539">
    <property type="protein sequence ID" value="AAK89539"/>
    <property type="gene ID" value="Atu3880"/>
</dbReference>
<dbReference type="GeneID" id="1135754"/>
<dbReference type="KEGG" id="atu:Atu3880"/>
<dbReference type="PATRIC" id="fig|176299.10.peg.3703"/>
<dbReference type="eggNOG" id="COG1129">
    <property type="taxonomic scope" value="Bacteria"/>
</dbReference>
<dbReference type="HOGENOM" id="CLU_000604_92_3_5"/>
<dbReference type="OrthoDB" id="9805029at2"/>
<dbReference type="PhylomeDB" id="Q8U949"/>
<dbReference type="BioCyc" id="AGRO:ATU3880-MONOMER"/>
<dbReference type="Proteomes" id="UP000000813">
    <property type="component" value="Chromosome linear"/>
</dbReference>
<dbReference type="GO" id="GO:0005886">
    <property type="term" value="C:plasma membrane"/>
    <property type="evidence" value="ECO:0007669"/>
    <property type="project" value="UniProtKB-SubCell"/>
</dbReference>
<dbReference type="GO" id="GO:0015611">
    <property type="term" value="F:ABC-type D-ribose transporter activity"/>
    <property type="evidence" value="ECO:0007669"/>
    <property type="project" value="UniProtKB-EC"/>
</dbReference>
<dbReference type="GO" id="GO:0005524">
    <property type="term" value="F:ATP binding"/>
    <property type="evidence" value="ECO:0007669"/>
    <property type="project" value="UniProtKB-KW"/>
</dbReference>
<dbReference type="GO" id="GO:0016887">
    <property type="term" value="F:ATP hydrolysis activity"/>
    <property type="evidence" value="ECO:0007669"/>
    <property type="project" value="InterPro"/>
</dbReference>
<dbReference type="CDD" id="cd03216">
    <property type="entry name" value="ABC_Carb_Monos_I"/>
    <property type="match status" value="1"/>
</dbReference>
<dbReference type="CDD" id="cd03215">
    <property type="entry name" value="ABC_Carb_Monos_II"/>
    <property type="match status" value="1"/>
</dbReference>
<dbReference type="FunFam" id="3.40.50.300:FF:000127">
    <property type="entry name" value="Ribose import ATP-binding protein RbsA"/>
    <property type="match status" value="1"/>
</dbReference>
<dbReference type="Gene3D" id="3.40.50.300">
    <property type="entry name" value="P-loop containing nucleotide triphosphate hydrolases"/>
    <property type="match status" value="2"/>
</dbReference>
<dbReference type="InterPro" id="IPR003593">
    <property type="entry name" value="AAA+_ATPase"/>
</dbReference>
<dbReference type="InterPro" id="IPR050107">
    <property type="entry name" value="ABC_carbohydrate_import_ATPase"/>
</dbReference>
<dbReference type="InterPro" id="IPR003439">
    <property type="entry name" value="ABC_transporter-like_ATP-bd"/>
</dbReference>
<dbReference type="InterPro" id="IPR017871">
    <property type="entry name" value="ABC_transporter-like_CS"/>
</dbReference>
<dbReference type="InterPro" id="IPR027417">
    <property type="entry name" value="P-loop_NTPase"/>
</dbReference>
<dbReference type="PANTHER" id="PTHR43790">
    <property type="entry name" value="CARBOHYDRATE TRANSPORT ATP-BINDING PROTEIN MG119-RELATED"/>
    <property type="match status" value="1"/>
</dbReference>
<dbReference type="PANTHER" id="PTHR43790:SF3">
    <property type="entry name" value="D-ALLOSE IMPORT ATP-BINDING PROTEIN ALSA-RELATED"/>
    <property type="match status" value="1"/>
</dbReference>
<dbReference type="Pfam" id="PF00005">
    <property type="entry name" value="ABC_tran"/>
    <property type="match status" value="2"/>
</dbReference>
<dbReference type="SMART" id="SM00382">
    <property type="entry name" value="AAA"/>
    <property type="match status" value="2"/>
</dbReference>
<dbReference type="SUPFAM" id="SSF52540">
    <property type="entry name" value="P-loop containing nucleoside triphosphate hydrolases"/>
    <property type="match status" value="2"/>
</dbReference>
<dbReference type="PROSITE" id="PS00211">
    <property type="entry name" value="ABC_TRANSPORTER_1"/>
    <property type="match status" value="1"/>
</dbReference>
<dbReference type="PROSITE" id="PS50893">
    <property type="entry name" value="ABC_TRANSPORTER_2"/>
    <property type="match status" value="2"/>
</dbReference>
<dbReference type="PROSITE" id="PS51254">
    <property type="entry name" value="RBSA"/>
    <property type="match status" value="1"/>
</dbReference>
<sequence length="506" mass="55631">MGEVILSMTNIHKAFGPVRALRSAALELQRGEIHALAGENGAGKSTLMHIIDGILQPDGGEILLDGKPVRISSPNAANRLGIGFVHQEIALCPEISVAENMYMSETGQSRSWFMNYRDLEKRAATVLREIGDIDPTHRAGDLSISQQQIVEIAKALTLDCRILILDEPTAALTETEAQTLFKIMRRLAARGIAIIYISHRMAEIFEHCDRITVMRDGCHIRTENIADISPEEVVNSMVGRVLDKLYPPKLADDEKSNEVILSVRGLNEGKRVFDVDFDLRRGEILGFAGLIGAGRSEIARAVCRLEGKPKGEVVLRGRSLKLRDYRDSIREGIVYLSEDRKGDGLFLNMSIATNVSALDIGRISNGMGFIQRRKEMKRADELGRRLKLRANSVGDAVSTLSGGNQQKVALAKMLSVEPEVIFLDEPTRGVDVGAKAEIHRQIRELARQGVGVVVISSELPELIGVSDRVLVVREGRITGEVEGDDMTEEKIMQLASITIMQNAAEA</sequence>
<feature type="chain" id="PRO_0000261034" description="Ribose import ATP-binding protein RbsA 2">
    <location>
        <begin position="1"/>
        <end position="506"/>
    </location>
</feature>
<feature type="domain" description="ABC transporter 1" evidence="1">
    <location>
        <begin position="6"/>
        <end position="241"/>
    </location>
</feature>
<feature type="domain" description="ABC transporter 2" evidence="1">
    <location>
        <begin position="254"/>
        <end position="499"/>
    </location>
</feature>
<feature type="binding site" evidence="1">
    <location>
        <begin position="38"/>
        <end position="45"/>
    </location>
    <ligand>
        <name>ATP</name>
        <dbReference type="ChEBI" id="CHEBI:30616"/>
    </ligand>
</feature>
<comment type="function">
    <text evidence="1">Part of the ABC transporter complex RbsABC involved in ribose import. Responsible for energy coupling to the transport system.</text>
</comment>
<comment type="catalytic activity">
    <reaction evidence="1">
        <text>D-ribose(out) + ATP + H2O = D-ribose(in) + ADP + phosphate + H(+)</text>
        <dbReference type="Rhea" id="RHEA:29903"/>
        <dbReference type="ChEBI" id="CHEBI:15377"/>
        <dbReference type="ChEBI" id="CHEBI:15378"/>
        <dbReference type="ChEBI" id="CHEBI:30616"/>
        <dbReference type="ChEBI" id="CHEBI:43474"/>
        <dbReference type="ChEBI" id="CHEBI:47013"/>
        <dbReference type="ChEBI" id="CHEBI:456216"/>
        <dbReference type="EC" id="7.5.2.7"/>
    </reaction>
</comment>
<comment type="subunit">
    <text evidence="1">The complex is composed of an ATP-binding protein (RbsA), two transmembrane proteins (RbsC) and a solute-binding protein (RbsB).</text>
</comment>
<comment type="subcellular location">
    <subcellularLocation>
        <location evidence="1">Cell inner membrane</location>
        <topology evidence="1">Peripheral membrane protein</topology>
    </subcellularLocation>
</comment>
<comment type="similarity">
    <text evidence="1">Belongs to the ABC transporter superfamily. Ribose importer (TC 3.A.1.2.1) family.</text>
</comment>
<gene>
    <name evidence="1" type="primary">rbsA2</name>
    <name type="ordered locus">Atu3880</name>
    <name type="ORF">AGR_L_1931</name>
</gene>
<reference key="1">
    <citation type="journal article" date="2001" name="Science">
        <title>The genome of the natural genetic engineer Agrobacterium tumefaciens C58.</title>
        <authorList>
            <person name="Wood D.W."/>
            <person name="Setubal J.C."/>
            <person name="Kaul R."/>
            <person name="Monks D.E."/>
            <person name="Kitajima J.P."/>
            <person name="Okura V.K."/>
            <person name="Zhou Y."/>
            <person name="Chen L."/>
            <person name="Wood G.E."/>
            <person name="Almeida N.F. Jr."/>
            <person name="Woo L."/>
            <person name="Chen Y."/>
            <person name="Paulsen I.T."/>
            <person name="Eisen J.A."/>
            <person name="Karp P.D."/>
            <person name="Bovee D. Sr."/>
            <person name="Chapman P."/>
            <person name="Clendenning J."/>
            <person name="Deatherage G."/>
            <person name="Gillet W."/>
            <person name="Grant C."/>
            <person name="Kutyavin T."/>
            <person name="Levy R."/>
            <person name="Li M.-J."/>
            <person name="McClelland E."/>
            <person name="Palmieri A."/>
            <person name="Raymond C."/>
            <person name="Rouse G."/>
            <person name="Saenphimmachak C."/>
            <person name="Wu Z."/>
            <person name="Romero P."/>
            <person name="Gordon D."/>
            <person name="Zhang S."/>
            <person name="Yoo H."/>
            <person name="Tao Y."/>
            <person name="Biddle P."/>
            <person name="Jung M."/>
            <person name="Krespan W."/>
            <person name="Perry M."/>
            <person name="Gordon-Kamm B."/>
            <person name="Liao L."/>
            <person name="Kim S."/>
            <person name="Hendrick C."/>
            <person name="Zhao Z.-Y."/>
            <person name="Dolan M."/>
            <person name="Chumley F."/>
            <person name="Tingey S.V."/>
            <person name="Tomb J.-F."/>
            <person name="Gordon M.P."/>
            <person name="Olson M.V."/>
            <person name="Nester E.W."/>
        </authorList>
    </citation>
    <scope>NUCLEOTIDE SEQUENCE [LARGE SCALE GENOMIC DNA]</scope>
    <source>
        <strain>C58 / ATCC 33970</strain>
    </source>
</reference>
<reference key="2">
    <citation type="journal article" date="2001" name="Science">
        <title>Genome sequence of the plant pathogen and biotechnology agent Agrobacterium tumefaciens C58.</title>
        <authorList>
            <person name="Goodner B."/>
            <person name="Hinkle G."/>
            <person name="Gattung S."/>
            <person name="Miller N."/>
            <person name="Blanchard M."/>
            <person name="Qurollo B."/>
            <person name="Goldman B.S."/>
            <person name="Cao Y."/>
            <person name="Askenazi M."/>
            <person name="Halling C."/>
            <person name="Mullin L."/>
            <person name="Houmiel K."/>
            <person name="Gordon J."/>
            <person name="Vaudin M."/>
            <person name="Iartchouk O."/>
            <person name="Epp A."/>
            <person name="Liu F."/>
            <person name="Wollam C."/>
            <person name="Allinger M."/>
            <person name="Doughty D."/>
            <person name="Scott C."/>
            <person name="Lappas C."/>
            <person name="Markelz B."/>
            <person name="Flanagan C."/>
            <person name="Crowell C."/>
            <person name="Gurson J."/>
            <person name="Lomo C."/>
            <person name="Sear C."/>
            <person name="Strub G."/>
            <person name="Cielo C."/>
            <person name="Slater S."/>
        </authorList>
    </citation>
    <scope>NUCLEOTIDE SEQUENCE [LARGE SCALE GENOMIC DNA]</scope>
    <source>
        <strain>C58 / ATCC 33970</strain>
    </source>
</reference>
<protein>
    <recommendedName>
        <fullName evidence="1">Ribose import ATP-binding protein RbsA 2</fullName>
        <ecNumber evidence="1">7.5.2.7</ecNumber>
    </recommendedName>
</protein>
<keyword id="KW-0067">ATP-binding</keyword>
<keyword id="KW-0997">Cell inner membrane</keyword>
<keyword id="KW-1003">Cell membrane</keyword>
<keyword id="KW-0472">Membrane</keyword>
<keyword id="KW-0547">Nucleotide-binding</keyword>
<keyword id="KW-1185">Reference proteome</keyword>
<keyword id="KW-0677">Repeat</keyword>
<keyword id="KW-0762">Sugar transport</keyword>
<keyword id="KW-1278">Translocase</keyword>
<keyword id="KW-0813">Transport</keyword>
<accession>Q8U949</accession>
<accession>Q7CTI8</accession>
<name>RBSA2_AGRFC</name>